<proteinExistence type="inferred from homology"/>
<reference key="1">
    <citation type="submission" date="2007-02" db="EMBL/GenBank/DDBJ databases">
        <title>Complete sequence of chromosome 1 of Rhodobacter sphaeroides ATCC 17029.</title>
        <authorList>
            <person name="Copeland A."/>
            <person name="Lucas S."/>
            <person name="Lapidus A."/>
            <person name="Barry K."/>
            <person name="Detter J.C."/>
            <person name="Glavina del Rio T."/>
            <person name="Hammon N."/>
            <person name="Israni S."/>
            <person name="Dalin E."/>
            <person name="Tice H."/>
            <person name="Pitluck S."/>
            <person name="Kiss H."/>
            <person name="Brettin T."/>
            <person name="Bruce D."/>
            <person name="Han C."/>
            <person name="Tapia R."/>
            <person name="Gilna P."/>
            <person name="Schmutz J."/>
            <person name="Larimer F."/>
            <person name="Land M."/>
            <person name="Hauser L."/>
            <person name="Kyrpides N."/>
            <person name="Mikhailova N."/>
            <person name="Richardson P."/>
            <person name="Mackenzie C."/>
            <person name="Choudhary M."/>
            <person name="Donohue T.J."/>
            <person name="Kaplan S."/>
        </authorList>
    </citation>
    <scope>NUCLEOTIDE SEQUENCE [LARGE SCALE GENOMIC DNA]</scope>
    <source>
        <strain>ATCC 17029 / ATH 2.4.9</strain>
    </source>
</reference>
<comment type="similarity">
    <text evidence="1">Belongs to the bacterial ribosomal protein bS21 family.</text>
</comment>
<evidence type="ECO:0000255" key="1">
    <source>
        <dbReference type="HAMAP-Rule" id="MF_00358"/>
    </source>
</evidence>
<evidence type="ECO:0000305" key="2"/>
<name>RS21_CERS1</name>
<dbReference type="EMBL" id="CP000577">
    <property type="protein sequence ID" value="ABN77475.1"/>
    <property type="molecule type" value="Genomic_DNA"/>
</dbReference>
<dbReference type="RefSeq" id="WP_002720900.1">
    <property type="nucleotide sequence ID" value="NC_009049.1"/>
</dbReference>
<dbReference type="SMR" id="A3PMA9"/>
<dbReference type="GeneID" id="67447468"/>
<dbReference type="KEGG" id="rsh:Rsph17029_2373"/>
<dbReference type="HOGENOM" id="CLU_159258_0_1_5"/>
<dbReference type="GO" id="GO:1990904">
    <property type="term" value="C:ribonucleoprotein complex"/>
    <property type="evidence" value="ECO:0007669"/>
    <property type="project" value="UniProtKB-KW"/>
</dbReference>
<dbReference type="GO" id="GO:0005840">
    <property type="term" value="C:ribosome"/>
    <property type="evidence" value="ECO:0007669"/>
    <property type="project" value="UniProtKB-KW"/>
</dbReference>
<dbReference type="GO" id="GO:0003735">
    <property type="term" value="F:structural constituent of ribosome"/>
    <property type="evidence" value="ECO:0007669"/>
    <property type="project" value="InterPro"/>
</dbReference>
<dbReference type="GO" id="GO:0006412">
    <property type="term" value="P:translation"/>
    <property type="evidence" value="ECO:0007669"/>
    <property type="project" value="UniProtKB-UniRule"/>
</dbReference>
<dbReference type="Gene3D" id="1.20.5.1150">
    <property type="entry name" value="Ribosomal protein S8"/>
    <property type="match status" value="1"/>
</dbReference>
<dbReference type="HAMAP" id="MF_00358">
    <property type="entry name" value="Ribosomal_bS21"/>
    <property type="match status" value="1"/>
</dbReference>
<dbReference type="InterPro" id="IPR001911">
    <property type="entry name" value="Ribosomal_bS21"/>
</dbReference>
<dbReference type="InterPro" id="IPR018278">
    <property type="entry name" value="Ribosomal_bS21_CS"/>
</dbReference>
<dbReference type="InterPro" id="IPR038380">
    <property type="entry name" value="Ribosomal_bS21_sf"/>
</dbReference>
<dbReference type="NCBIfam" id="TIGR00030">
    <property type="entry name" value="S21p"/>
    <property type="match status" value="1"/>
</dbReference>
<dbReference type="PANTHER" id="PTHR21109">
    <property type="entry name" value="MITOCHONDRIAL 28S RIBOSOMAL PROTEIN S21"/>
    <property type="match status" value="1"/>
</dbReference>
<dbReference type="PANTHER" id="PTHR21109:SF0">
    <property type="entry name" value="SMALL RIBOSOMAL SUBUNIT PROTEIN BS21M"/>
    <property type="match status" value="1"/>
</dbReference>
<dbReference type="Pfam" id="PF01165">
    <property type="entry name" value="Ribosomal_S21"/>
    <property type="match status" value="1"/>
</dbReference>
<dbReference type="PROSITE" id="PS01181">
    <property type="entry name" value="RIBOSOMAL_S21"/>
    <property type="match status" value="1"/>
</dbReference>
<organism>
    <name type="scientific">Cereibacter sphaeroides (strain ATCC 17029 / ATH 2.4.9)</name>
    <name type="common">Rhodobacter sphaeroides</name>
    <dbReference type="NCBI Taxonomy" id="349101"/>
    <lineage>
        <taxon>Bacteria</taxon>
        <taxon>Pseudomonadati</taxon>
        <taxon>Pseudomonadota</taxon>
        <taxon>Alphaproteobacteria</taxon>
        <taxon>Rhodobacterales</taxon>
        <taxon>Paracoccaceae</taxon>
        <taxon>Cereibacter</taxon>
    </lineage>
</organism>
<sequence length="68" mass="8026">MQVSVRDNNVEQALRALKKKLQREGVFREMKLKQHFEKPSVKRAREQAEAVRRARKLARKKAQREGAL</sequence>
<protein>
    <recommendedName>
        <fullName evidence="1">Small ribosomal subunit protein bS21</fullName>
    </recommendedName>
    <alternativeName>
        <fullName evidence="2">30S ribosomal protein S21</fullName>
    </alternativeName>
</protein>
<feature type="chain" id="PRO_1000005162" description="Small ribosomal subunit protein bS21">
    <location>
        <begin position="1"/>
        <end position="68"/>
    </location>
</feature>
<gene>
    <name evidence="1" type="primary">rpsU</name>
    <name type="ordered locus">Rsph17029_2373</name>
</gene>
<accession>A3PMA9</accession>
<keyword id="KW-0687">Ribonucleoprotein</keyword>
<keyword id="KW-0689">Ribosomal protein</keyword>